<keyword id="KW-0488">Methylation</keyword>
<keyword id="KW-1185">Reference proteome</keyword>
<keyword id="KW-0687">Ribonucleoprotein</keyword>
<keyword id="KW-0689">Ribosomal protein</keyword>
<keyword id="KW-0694">RNA-binding</keyword>
<keyword id="KW-0699">rRNA-binding</keyword>
<keyword id="KW-0820">tRNA-binding</keyword>
<organism>
    <name type="scientific">Synechocystis sp. (strain ATCC 27184 / PCC 6803 / Kazusa)</name>
    <dbReference type="NCBI Taxonomy" id="1111708"/>
    <lineage>
        <taxon>Bacteria</taxon>
        <taxon>Bacillati</taxon>
        <taxon>Cyanobacteriota</taxon>
        <taxon>Cyanophyceae</taxon>
        <taxon>Synechococcales</taxon>
        <taxon>Merismopediaceae</taxon>
        <taxon>Synechocystis</taxon>
    </lineage>
</organism>
<evidence type="ECO:0000250" key="1"/>
<evidence type="ECO:0000255" key="2">
    <source>
        <dbReference type="HAMAP-Rule" id="MF_00403"/>
    </source>
</evidence>
<evidence type="ECO:0000256" key="3">
    <source>
        <dbReference type="SAM" id="MobiDB-lite"/>
    </source>
</evidence>
<evidence type="ECO:0000305" key="4"/>
<proteinExistence type="inferred from homology"/>
<accession>P74230</accession>
<dbReference type="EMBL" id="BA000022">
    <property type="protein sequence ID" value="BAA18324.1"/>
    <property type="molecule type" value="Genomic_DNA"/>
</dbReference>
<dbReference type="PIR" id="S75865">
    <property type="entry name" value="S75865"/>
</dbReference>
<dbReference type="SMR" id="P74230"/>
<dbReference type="FunCoup" id="P74230">
    <property type="interactions" value="434"/>
</dbReference>
<dbReference type="IntAct" id="P74230">
    <property type="interactions" value="4"/>
</dbReference>
<dbReference type="STRING" id="1148.gene:10499200"/>
<dbReference type="PaxDb" id="1148-1653410"/>
<dbReference type="EnsemblBacteria" id="BAA18324">
    <property type="protein sequence ID" value="BAA18324"/>
    <property type="gene ID" value="BAA18324"/>
</dbReference>
<dbReference type="KEGG" id="syn:sll1096"/>
<dbReference type="eggNOG" id="COG0048">
    <property type="taxonomic scope" value="Bacteria"/>
</dbReference>
<dbReference type="InParanoid" id="P74230"/>
<dbReference type="PhylomeDB" id="P74230"/>
<dbReference type="Proteomes" id="UP000001425">
    <property type="component" value="Chromosome"/>
</dbReference>
<dbReference type="GO" id="GO:0005840">
    <property type="term" value="C:ribosome"/>
    <property type="evidence" value="ECO:0000318"/>
    <property type="project" value="GO_Central"/>
</dbReference>
<dbReference type="GO" id="GO:0015935">
    <property type="term" value="C:small ribosomal subunit"/>
    <property type="evidence" value="ECO:0007669"/>
    <property type="project" value="InterPro"/>
</dbReference>
<dbReference type="GO" id="GO:0019843">
    <property type="term" value="F:rRNA binding"/>
    <property type="evidence" value="ECO:0007669"/>
    <property type="project" value="UniProtKB-UniRule"/>
</dbReference>
<dbReference type="GO" id="GO:0003735">
    <property type="term" value="F:structural constituent of ribosome"/>
    <property type="evidence" value="ECO:0000318"/>
    <property type="project" value="GO_Central"/>
</dbReference>
<dbReference type="GO" id="GO:0000049">
    <property type="term" value="F:tRNA binding"/>
    <property type="evidence" value="ECO:0007669"/>
    <property type="project" value="UniProtKB-UniRule"/>
</dbReference>
<dbReference type="GO" id="GO:0006412">
    <property type="term" value="P:translation"/>
    <property type="evidence" value="ECO:0000318"/>
    <property type="project" value="GO_Central"/>
</dbReference>
<dbReference type="CDD" id="cd03368">
    <property type="entry name" value="Ribosomal_S12"/>
    <property type="match status" value="1"/>
</dbReference>
<dbReference type="FunFam" id="2.40.50.140:FF:000001">
    <property type="entry name" value="30S ribosomal protein S12"/>
    <property type="match status" value="1"/>
</dbReference>
<dbReference type="Gene3D" id="2.40.50.140">
    <property type="entry name" value="Nucleic acid-binding proteins"/>
    <property type="match status" value="1"/>
</dbReference>
<dbReference type="HAMAP" id="MF_00403_B">
    <property type="entry name" value="Ribosomal_uS12_B"/>
    <property type="match status" value="1"/>
</dbReference>
<dbReference type="InterPro" id="IPR012340">
    <property type="entry name" value="NA-bd_OB-fold"/>
</dbReference>
<dbReference type="InterPro" id="IPR006032">
    <property type="entry name" value="Ribosomal_uS12"/>
</dbReference>
<dbReference type="InterPro" id="IPR005679">
    <property type="entry name" value="Ribosomal_uS12_bac"/>
</dbReference>
<dbReference type="NCBIfam" id="TIGR00981">
    <property type="entry name" value="rpsL_bact"/>
    <property type="match status" value="1"/>
</dbReference>
<dbReference type="PANTHER" id="PTHR11652">
    <property type="entry name" value="30S RIBOSOMAL PROTEIN S12 FAMILY MEMBER"/>
    <property type="match status" value="1"/>
</dbReference>
<dbReference type="Pfam" id="PF00164">
    <property type="entry name" value="Ribosom_S12_S23"/>
    <property type="match status" value="1"/>
</dbReference>
<dbReference type="PIRSF" id="PIRSF002133">
    <property type="entry name" value="Ribosomal_S12/S23"/>
    <property type="match status" value="1"/>
</dbReference>
<dbReference type="PRINTS" id="PR01034">
    <property type="entry name" value="RIBOSOMALS12"/>
</dbReference>
<dbReference type="SUPFAM" id="SSF50249">
    <property type="entry name" value="Nucleic acid-binding proteins"/>
    <property type="match status" value="1"/>
</dbReference>
<dbReference type="PROSITE" id="PS00055">
    <property type="entry name" value="RIBOSOMAL_S12"/>
    <property type="match status" value="1"/>
</dbReference>
<sequence length="126" mass="14177">MPTIQQLIRSERSKVQKKTKSPALKQCPQRRGVCTRVYTTTPKKPNSALRKVARVRLTSGFEVTAYIPGIGHNLQEHSVVLIRGGRVKDLPGVRYHIVRGTLDATGVKDRKQGRSKYGTKREKAKK</sequence>
<feature type="chain" id="PRO_0000146338" description="Small ribosomal subunit protein uS12">
    <location>
        <begin position="1"/>
        <end position="126"/>
    </location>
</feature>
<feature type="region of interest" description="Disordered" evidence="3">
    <location>
        <begin position="1"/>
        <end position="28"/>
    </location>
</feature>
<feature type="region of interest" description="Disordered" evidence="3">
    <location>
        <begin position="104"/>
        <end position="126"/>
    </location>
</feature>
<feature type="compositionally biased region" description="Basic residues" evidence="3">
    <location>
        <begin position="113"/>
        <end position="126"/>
    </location>
</feature>
<feature type="modified residue" description="3-methylthioaspartic acid" evidence="1">
    <location>
        <position position="89"/>
    </location>
</feature>
<name>RS12_SYNY3</name>
<protein>
    <recommendedName>
        <fullName evidence="2">Small ribosomal subunit protein uS12</fullName>
    </recommendedName>
    <alternativeName>
        <fullName evidence="4">30S ribosomal protein S12</fullName>
    </alternativeName>
</protein>
<reference key="1">
    <citation type="journal article" date="1996" name="DNA Res.">
        <title>Sequence analysis of the genome of the unicellular cyanobacterium Synechocystis sp. strain PCC6803. II. Sequence determination of the entire genome and assignment of potential protein-coding regions.</title>
        <authorList>
            <person name="Kaneko T."/>
            <person name="Sato S."/>
            <person name="Kotani H."/>
            <person name="Tanaka A."/>
            <person name="Asamizu E."/>
            <person name="Nakamura Y."/>
            <person name="Miyajima N."/>
            <person name="Hirosawa M."/>
            <person name="Sugiura M."/>
            <person name="Sasamoto S."/>
            <person name="Kimura T."/>
            <person name="Hosouchi T."/>
            <person name="Matsuno A."/>
            <person name="Muraki A."/>
            <person name="Nakazaki N."/>
            <person name="Naruo K."/>
            <person name="Okumura S."/>
            <person name="Shimpo S."/>
            <person name="Takeuchi C."/>
            <person name="Wada T."/>
            <person name="Watanabe A."/>
            <person name="Yamada M."/>
            <person name="Yasuda M."/>
            <person name="Tabata S."/>
        </authorList>
    </citation>
    <scope>NUCLEOTIDE SEQUENCE [LARGE SCALE GENOMIC DNA]</scope>
    <source>
        <strain>ATCC 27184 / PCC 6803 / Kazusa</strain>
    </source>
</reference>
<gene>
    <name evidence="2" type="primary">rpsL</name>
    <name evidence="2" type="synonym">rps12</name>
    <name type="ordered locus">sll1096</name>
</gene>
<comment type="function">
    <text evidence="2">With S4 and S5 plays an important role in translational accuracy.</text>
</comment>
<comment type="function">
    <text evidence="2">Interacts with and stabilizes bases of the 16S rRNA that are involved in tRNA selection in the A site and with the mRNA backbone. Located at the interface of the 30S and 50S subunits, it traverses the body of the 30S subunit contacting proteins on the other side and probably holding the rRNA structure together. The combined cluster of proteins S8, S12 and S17 appears to hold together the shoulder and platform of the 30S subunit.</text>
</comment>
<comment type="subunit">
    <text evidence="2">Part of the 30S ribosomal subunit. Contacts proteins S8 and S17. May interact with IF1 in the 30S initiation complex.</text>
</comment>
<comment type="similarity">
    <text evidence="2">Belongs to the universal ribosomal protein uS12 family.</text>
</comment>